<evidence type="ECO:0000250" key="1"/>
<evidence type="ECO:0000305" key="2"/>
<keyword id="KW-0002">3D-structure</keyword>
<keyword id="KW-0378">Hydrolase</keyword>
<keyword id="KW-0645">Protease</keyword>
<keyword id="KW-0964">Secreted</keyword>
<keyword id="KW-0720">Serine protease</keyword>
<keyword id="KW-0732">Signal</keyword>
<feature type="signal peptide" evidence="1">
    <location>
        <begin position="1"/>
        <end position="36"/>
    </location>
</feature>
<feature type="chain" id="PRO_0000359551" description="Serine protease SplC">
    <location>
        <begin position="37"/>
        <end position="239"/>
    </location>
</feature>
<feature type="active site" description="Charge relay system" evidence="1">
    <location>
        <position position="75"/>
    </location>
</feature>
<feature type="active site" description="Charge relay system" evidence="1">
    <location>
        <position position="113"/>
    </location>
</feature>
<feature type="active site" description="Charge relay system" evidence="1">
    <location>
        <position position="193"/>
    </location>
</feature>
<name>SPLC_STAAU</name>
<reference key="1">
    <citation type="journal article" date="1997" name="Biochim. Biophys. Acta">
        <title>Molecular cloning and expression of a novel Staphylococcus aureus antigen.</title>
        <authorList>
            <person name="Rieneck K."/>
            <person name="Renneberg J."/>
            <person name="Diamant M."/>
            <person name="Gutschik E."/>
            <person name="Bendtzen K."/>
        </authorList>
    </citation>
    <scope>NUCLEOTIDE SEQUENCE [GENOMIC DNA]</scope>
    <source>
        <strain>FDA 485</strain>
    </source>
</reference>
<protein>
    <recommendedName>
        <fullName>Serine protease SplC</fullName>
        <ecNumber>3.4.21.-</ecNumber>
    </recommendedName>
</protein>
<sequence length="239" mass="26099">MNKNIVIKSMAALAILTSVTGINAAVVEETQQIANAEKNVTQVKDTNNFPYNGVVSFKDATGFVIGKNTIITNKHVSKDYKVGDRITAHPNGDKGNGGIYKIKSISDYPGDEDISVMNIEEQAVERGPKGFNFNENVQAFNFAKDAKVDDKIKVIGYPLPAQNSFKQFESTGTIKRIKDNILNFDAYIEPGNSGSPVLNSNNEVIGVVYGGIGKIGSEYNGAVYFTPQIKDFIQKHIEQ</sequence>
<comment type="subcellular location">
    <subcellularLocation>
        <location evidence="1">Secreted</location>
    </subcellularLocation>
</comment>
<comment type="similarity">
    <text evidence="2">Belongs to the peptidase S1B family.</text>
</comment>
<organism>
    <name type="scientific">Staphylococcus aureus</name>
    <dbReference type="NCBI Taxonomy" id="1280"/>
    <lineage>
        <taxon>Bacteria</taxon>
        <taxon>Bacillati</taxon>
        <taxon>Bacillota</taxon>
        <taxon>Bacilli</taxon>
        <taxon>Bacillales</taxon>
        <taxon>Staphylococcaceae</taxon>
        <taxon>Staphylococcus</taxon>
    </lineage>
</organism>
<proteinExistence type="evidence at protein level"/>
<accession>Q53782</accession>
<dbReference type="EC" id="3.4.21.-"/>
<dbReference type="EMBL" id="U63529">
    <property type="protein sequence ID" value="AAC12901.1"/>
    <property type="molecule type" value="Genomic_DNA"/>
</dbReference>
<dbReference type="RefSeq" id="WP_001038872.1">
    <property type="nucleotide sequence ID" value="NZ_WYDB01000002.1"/>
</dbReference>
<dbReference type="PDB" id="2AS9">
    <property type="method" value="X-ray"/>
    <property type="resolution" value="1.70 A"/>
    <property type="chains" value="A/B=37-239"/>
</dbReference>
<dbReference type="PDBsum" id="2AS9"/>
<dbReference type="SMR" id="Q53782"/>
<dbReference type="MEROPS" id="S01.283"/>
<dbReference type="OMA" id="DYPGNED"/>
<dbReference type="GO" id="GO:0005576">
    <property type="term" value="C:extracellular region"/>
    <property type="evidence" value="ECO:0007669"/>
    <property type="project" value="UniProtKB-SubCell"/>
</dbReference>
<dbReference type="GO" id="GO:0004252">
    <property type="term" value="F:serine-type endopeptidase activity"/>
    <property type="evidence" value="ECO:0007669"/>
    <property type="project" value="InterPro"/>
</dbReference>
<dbReference type="GO" id="GO:0006508">
    <property type="term" value="P:proteolysis"/>
    <property type="evidence" value="ECO:0007669"/>
    <property type="project" value="UniProtKB-KW"/>
</dbReference>
<dbReference type="Gene3D" id="2.40.10.10">
    <property type="entry name" value="Trypsin-like serine proteases"/>
    <property type="match status" value="2"/>
</dbReference>
<dbReference type="InterPro" id="IPR009003">
    <property type="entry name" value="Peptidase_S1_PA"/>
</dbReference>
<dbReference type="InterPro" id="IPR043504">
    <property type="entry name" value="Peptidase_S1_PA_chymotrypsin"/>
</dbReference>
<dbReference type="InterPro" id="IPR008256">
    <property type="entry name" value="Peptidase_S1B"/>
</dbReference>
<dbReference type="InterPro" id="IPR008353">
    <property type="entry name" value="Peptidase_S1B_tx"/>
</dbReference>
<dbReference type="InterPro" id="IPR001254">
    <property type="entry name" value="Trypsin_dom"/>
</dbReference>
<dbReference type="InterPro" id="IPR028301">
    <property type="entry name" value="V8_his_AS"/>
</dbReference>
<dbReference type="PANTHER" id="PTHR43019:SF23">
    <property type="entry name" value="PROTEASE DO-LIKE 5, CHLOROPLASTIC"/>
    <property type="match status" value="1"/>
</dbReference>
<dbReference type="PANTHER" id="PTHR43019">
    <property type="entry name" value="SERINE ENDOPROTEASE DEGS"/>
    <property type="match status" value="1"/>
</dbReference>
<dbReference type="Pfam" id="PF00089">
    <property type="entry name" value="Trypsin"/>
    <property type="match status" value="1"/>
</dbReference>
<dbReference type="PRINTS" id="PR01774">
    <property type="entry name" value="EXFOLTOXIN"/>
</dbReference>
<dbReference type="PRINTS" id="PR00839">
    <property type="entry name" value="V8PROTEASE"/>
</dbReference>
<dbReference type="SUPFAM" id="SSF50494">
    <property type="entry name" value="Trypsin-like serine proteases"/>
    <property type="match status" value="1"/>
</dbReference>
<dbReference type="PROSITE" id="PS00672">
    <property type="entry name" value="V8_HIS"/>
    <property type="match status" value="1"/>
</dbReference>
<gene>
    <name type="primary">splC</name>
</gene>